<accession>O31623</accession>
<comment type="function">
    <text evidence="2">Involved in sporulation.</text>
</comment>
<comment type="subcellular location">
    <subcellularLocation>
        <location evidence="3">Cell membrane</location>
        <topology evidence="3">Multi-pass membrane protein</topology>
    </subcellularLocation>
</comment>
<comment type="developmental stage">
    <text evidence="2">Expressed during sporulation.</text>
</comment>
<comment type="similarity">
    <text evidence="3">Belongs to the UPF0713 family.</text>
</comment>
<keyword id="KW-1003">Cell membrane</keyword>
<keyword id="KW-0472">Membrane</keyword>
<keyword id="KW-1185">Reference proteome</keyword>
<keyword id="KW-0749">Sporulation</keyword>
<keyword id="KW-0812">Transmembrane</keyword>
<keyword id="KW-1133">Transmembrane helix</keyword>
<name>YJCA_BACSU</name>
<protein>
    <recommendedName>
        <fullName>Sporulation protein YjcA</fullName>
    </recommendedName>
</protein>
<dbReference type="EMBL" id="AL009126">
    <property type="protein sequence ID" value="CAB13036.1"/>
    <property type="molecule type" value="Genomic_DNA"/>
</dbReference>
<dbReference type="PIR" id="A69846">
    <property type="entry name" value="A69846"/>
</dbReference>
<dbReference type="RefSeq" id="NP_389061.1">
    <property type="nucleotide sequence ID" value="NC_000964.3"/>
</dbReference>
<dbReference type="RefSeq" id="WP_003244844.1">
    <property type="nucleotide sequence ID" value="NZ_OZ025638.1"/>
</dbReference>
<dbReference type="FunCoup" id="O31623">
    <property type="interactions" value="24"/>
</dbReference>
<dbReference type="STRING" id="224308.BSU11790"/>
<dbReference type="PaxDb" id="224308-BSU11790"/>
<dbReference type="EnsemblBacteria" id="CAB13036">
    <property type="protein sequence ID" value="CAB13036"/>
    <property type="gene ID" value="BSU_11790"/>
</dbReference>
<dbReference type="GeneID" id="936428"/>
<dbReference type="KEGG" id="bsu:BSU11790"/>
<dbReference type="PATRIC" id="fig|224308.179.peg.1268"/>
<dbReference type="eggNOG" id="ENOG5032RXN">
    <property type="taxonomic scope" value="Bacteria"/>
</dbReference>
<dbReference type="InParanoid" id="O31623"/>
<dbReference type="OrthoDB" id="4722315at2"/>
<dbReference type="PhylomeDB" id="O31623"/>
<dbReference type="BioCyc" id="BSUB:BSU11790-MONOMER"/>
<dbReference type="Proteomes" id="UP000001570">
    <property type="component" value="Chromosome"/>
</dbReference>
<dbReference type="GO" id="GO:0005886">
    <property type="term" value="C:plasma membrane"/>
    <property type="evidence" value="ECO:0007669"/>
    <property type="project" value="UniProtKB-SubCell"/>
</dbReference>
<dbReference type="GO" id="GO:0030435">
    <property type="term" value="P:sporulation resulting in formation of a cellular spore"/>
    <property type="evidence" value="ECO:0007669"/>
    <property type="project" value="UniProtKB-KW"/>
</dbReference>
<dbReference type="InterPro" id="IPR010773">
    <property type="entry name" value="Mycophage_PG1_Gp7"/>
</dbReference>
<dbReference type="Pfam" id="PF07098">
    <property type="entry name" value="DUF1360"/>
    <property type="match status" value="1"/>
</dbReference>
<proteinExistence type="evidence at transcript level"/>
<reference key="1">
    <citation type="journal article" date="1997" name="Nature">
        <title>The complete genome sequence of the Gram-positive bacterium Bacillus subtilis.</title>
        <authorList>
            <person name="Kunst F."/>
            <person name="Ogasawara N."/>
            <person name="Moszer I."/>
            <person name="Albertini A.M."/>
            <person name="Alloni G."/>
            <person name="Azevedo V."/>
            <person name="Bertero M.G."/>
            <person name="Bessieres P."/>
            <person name="Bolotin A."/>
            <person name="Borchert S."/>
            <person name="Borriss R."/>
            <person name="Boursier L."/>
            <person name="Brans A."/>
            <person name="Braun M."/>
            <person name="Brignell S.C."/>
            <person name="Bron S."/>
            <person name="Brouillet S."/>
            <person name="Bruschi C.V."/>
            <person name="Caldwell B."/>
            <person name="Capuano V."/>
            <person name="Carter N.M."/>
            <person name="Choi S.-K."/>
            <person name="Codani J.-J."/>
            <person name="Connerton I.F."/>
            <person name="Cummings N.J."/>
            <person name="Daniel R.A."/>
            <person name="Denizot F."/>
            <person name="Devine K.M."/>
            <person name="Duesterhoeft A."/>
            <person name="Ehrlich S.D."/>
            <person name="Emmerson P.T."/>
            <person name="Entian K.-D."/>
            <person name="Errington J."/>
            <person name="Fabret C."/>
            <person name="Ferrari E."/>
            <person name="Foulger D."/>
            <person name="Fritz C."/>
            <person name="Fujita M."/>
            <person name="Fujita Y."/>
            <person name="Fuma S."/>
            <person name="Galizzi A."/>
            <person name="Galleron N."/>
            <person name="Ghim S.-Y."/>
            <person name="Glaser P."/>
            <person name="Goffeau A."/>
            <person name="Golightly E.J."/>
            <person name="Grandi G."/>
            <person name="Guiseppi G."/>
            <person name="Guy B.J."/>
            <person name="Haga K."/>
            <person name="Haiech J."/>
            <person name="Harwood C.R."/>
            <person name="Henaut A."/>
            <person name="Hilbert H."/>
            <person name="Holsappel S."/>
            <person name="Hosono S."/>
            <person name="Hullo M.-F."/>
            <person name="Itaya M."/>
            <person name="Jones L.-M."/>
            <person name="Joris B."/>
            <person name="Karamata D."/>
            <person name="Kasahara Y."/>
            <person name="Klaerr-Blanchard M."/>
            <person name="Klein C."/>
            <person name="Kobayashi Y."/>
            <person name="Koetter P."/>
            <person name="Koningstein G."/>
            <person name="Krogh S."/>
            <person name="Kumano M."/>
            <person name="Kurita K."/>
            <person name="Lapidus A."/>
            <person name="Lardinois S."/>
            <person name="Lauber J."/>
            <person name="Lazarevic V."/>
            <person name="Lee S.-M."/>
            <person name="Levine A."/>
            <person name="Liu H."/>
            <person name="Masuda S."/>
            <person name="Mauel C."/>
            <person name="Medigue C."/>
            <person name="Medina N."/>
            <person name="Mellado R.P."/>
            <person name="Mizuno M."/>
            <person name="Moestl D."/>
            <person name="Nakai S."/>
            <person name="Noback M."/>
            <person name="Noone D."/>
            <person name="O'Reilly M."/>
            <person name="Ogawa K."/>
            <person name="Ogiwara A."/>
            <person name="Oudega B."/>
            <person name="Park S.-H."/>
            <person name="Parro V."/>
            <person name="Pohl T.M."/>
            <person name="Portetelle D."/>
            <person name="Porwollik S."/>
            <person name="Prescott A.M."/>
            <person name="Presecan E."/>
            <person name="Pujic P."/>
            <person name="Purnelle B."/>
            <person name="Rapoport G."/>
            <person name="Rey M."/>
            <person name="Reynolds S."/>
            <person name="Rieger M."/>
            <person name="Rivolta C."/>
            <person name="Rocha E."/>
            <person name="Roche B."/>
            <person name="Rose M."/>
            <person name="Sadaie Y."/>
            <person name="Sato T."/>
            <person name="Scanlan E."/>
            <person name="Schleich S."/>
            <person name="Schroeter R."/>
            <person name="Scoffone F."/>
            <person name="Sekiguchi J."/>
            <person name="Sekowska A."/>
            <person name="Seror S.J."/>
            <person name="Serror P."/>
            <person name="Shin B.-S."/>
            <person name="Soldo B."/>
            <person name="Sorokin A."/>
            <person name="Tacconi E."/>
            <person name="Takagi T."/>
            <person name="Takahashi H."/>
            <person name="Takemaru K."/>
            <person name="Takeuchi M."/>
            <person name="Tamakoshi A."/>
            <person name="Tanaka T."/>
            <person name="Terpstra P."/>
            <person name="Tognoni A."/>
            <person name="Tosato V."/>
            <person name="Uchiyama S."/>
            <person name="Vandenbol M."/>
            <person name="Vannier F."/>
            <person name="Vassarotti A."/>
            <person name="Viari A."/>
            <person name="Wambutt R."/>
            <person name="Wedler E."/>
            <person name="Wedler H."/>
            <person name="Weitzenegger T."/>
            <person name="Winters P."/>
            <person name="Wipat A."/>
            <person name="Yamamoto H."/>
            <person name="Yamane K."/>
            <person name="Yasumoto K."/>
            <person name="Yata K."/>
            <person name="Yoshida K."/>
            <person name="Yoshikawa H.-F."/>
            <person name="Zumstein E."/>
            <person name="Yoshikawa H."/>
            <person name="Danchin A."/>
        </authorList>
    </citation>
    <scope>NUCLEOTIDE SEQUENCE [LARGE SCALE GENOMIC DNA]</scope>
    <source>
        <strain>168</strain>
    </source>
</reference>
<reference key="2">
    <citation type="journal article" date="2003" name="Microbiology">
        <title>Bacillus subtilis spoVIF (yjcC) gene, involved in coat assembly and spore resistance.</title>
        <authorList>
            <person name="Kuwana R."/>
            <person name="Yamamura S."/>
            <person name="Ikejiri H."/>
            <person name="Kobayashi K."/>
            <person name="Ogasawara N."/>
            <person name="Asai K."/>
            <person name="Sadaie Y."/>
            <person name="Takamatsu H."/>
            <person name="Watabe K."/>
        </authorList>
    </citation>
    <scope>DEVELOPMENTAL STAGE</scope>
    <scope>FUNCTION</scope>
</reference>
<sequence length="118" mass="13036">MVINGLTIVLLSLAVFRLARLLVFDTIMAPLRSLFHEEKEEKDADGNIETYIVIKGTGVRAFIGELLSCYWCTGVWCAGFLILCQAVIPQAAQWLILLLAIAGLAGIIETLVSKWLQE</sequence>
<gene>
    <name type="primary">yjcA</name>
    <name type="ordered locus">BSU11790</name>
</gene>
<feature type="chain" id="PRO_0000360438" description="Sporulation protein YjcA">
    <location>
        <begin position="1"/>
        <end position="118"/>
    </location>
</feature>
<feature type="transmembrane region" description="Helical" evidence="1">
    <location>
        <begin position="8"/>
        <end position="28"/>
    </location>
</feature>
<feature type="transmembrane region" description="Helical" evidence="1">
    <location>
        <begin position="62"/>
        <end position="82"/>
    </location>
</feature>
<feature type="transmembrane region" description="Helical" evidence="1">
    <location>
        <begin position="92"/>
        <end position="112"/>
    </location>
</feature>
<evidence type="ECO:0000255" key="1"/>
<evidence type="ECO:0000269" key="2">
    <source>
    </source>
</evidence>
<evidence type="ECO:0000305" key="3"/>
<organism>
    <name type="scientific">Bacillus subtilis (strain 168)</name>
    <dbReference type="NCBI Taxonomy" id="224308"/>
    <lineage>
        <taxon>Bacteria</taxon>
        <taxon>Bacillati</taxon>
        <taxon>Bacillota</taxon>
        <taxon>Bacilli</taxon>
        <taxon>Bacillales</taxon>
        <taxon>Bacillaceae</taxon>
        <taxon>Bacillus</taxon>
    </lineage>
</organism>